<reference key="1">
    <citation type="journal article" date="2001" name="Proc. Natl. Acad. Sci. U.S.A.">
        <title>The complete genome of the crenarchaeon Sulfolobus solfataricus P2.</title>
        <authorList>
            <person name="She Q."/>
            <person name="Singh R.K."/>
            <person name="Confalonieri F."/>
            <person name="Zivanovic Y."/>
            <person name="Allard G."/>
            <person name="Awayez M.J."/>
            <person name="Chan-Weiher C.C.-Y."/>
            <person name="Clausen I.G."/>
            <person name="Curtis B.A."/>
            <person name="De Moors A."/>
            <person name="Erauso G."/>
            <person name="Fletcher C."/>
            <person name="Gordon P.M.K."/>
            <person name="Heikamp-de Jong I."/>
            <person name="Jeffries A.C."/>
            <person name="Kozera C.J."/>
            <person name="Medina N."/>
            <person name="Peng X."/>
            <person name="Thi-Ngoc H.P."/>
            <person name="Redder P."/>
            <person name="Schenk M.E."/>
            <person name="Theriault C."/>
            <person name="Tolstrup N."/>
            <person name="Charlebois R.L."/>
            <person name="Doolittle W.F."/>
            <person name="Duguet M."/>
            <person name="Gaasterland T."/>
            <person name="Garrett R.A."/>
            <person name="Ragan M.A."/>
            <person name="Sensen C.W."/>
            <person name="Van der Oost J."/>
        </authorList>
    </citation>
    <scope>NUCLEOTIDE SEQUENCE [LARGE SCALE GENOMIC DNA]</scope>
    <source>
        <strain evidence="9">ATCC 35092 / DSM 1617 / JCM 11322 / P2</strain>
    </source>
</reference>
<reference key="2">
    <citation type="journal article" date="2006" name="J. Biol. Chem.">
        <title>Identification of the missing links in prokaryotic pentose oxidation pathways: evidence for enzyme recruitment.</title>
        <authorList>
            <person name="Brouns S.J."/>
            <person name="Walther J."/>
            <person name="Snijders A.P."/>
            <person name="van de Werken H.J."/>
            <person name="Willemen H.L."/>
            <person name="Worm P."/>
            <person name="de Vos M.G."/>
            <person name="Andersson A."/>
            <person name="Lundgren M."/>
            <person name="Mazon H.F."/>
            <person name="van den Heuvel R.H."/>
            <person name="Nilsson P."/>
            <person name="Salmon L."/>
            <person name="de Vos W.M."/>
            <person name="Wright P.C."/>
            <person name="Bernander R."/>
            <person name="van der Oost J."/>
        </authorList>
    </citation>
    <scope>FUNCTION</scope>
    <scope>SUBUNIT</scope>
    <scope>INDUCTION BY D-ARABINOSE</scope>
    <scope>CATALYTIC ACTIVITY</scope>
</reference>
<reference key="3">
    <citation type="journal article" date="2008" name="J. Mol. Biol.">
        <title>Structural insight into substrate binding and catalysis of a novel 2-keto-3-deoxy-D-arabinonate dehydratase illustrates common mechanistic features of the FAH superfamily.</title>
        <authorList>
            <person name="Brouns S.J."/>
            <person name="Barends T.R."/>
            <person name="Worm P."/>
            <person name="Akerboom J."/>
            <person name="Turnbull A.P."/>
            <person name="Salmon L."/>
            <person name="van der Oost J."/>
        </authorList>
    </citation>
    <scope>X-RAY CRYSTALLOGRAPHY (2.10 ANGSTROMS) OF 6-298 IN COMPLEX WITH THE SUBSTRATE ANALOG 2-OXOBUTANOATE; THE PRODUCT 2,5-DIOXOPENTANOATE; CALCIUM AND MAGNESIUM</scope>
    <scope>COFACTOR</scope>
    <scope>SUBUNIT</scope>
</reference>
<name>KDAD_SACS2</name>
<dbReference type="EC" id="4.2.1.141" evidence="6"/>
<dbReference type="EMBL" id="AE006641">
    <property type="protein sequence ID" value="AAK43221.1"/>
    <property type="molecule type" value="Genomic_DNA"/>
</dbReference>
<dbReference type="PIR" id="F90495">
    <property type="entry name" value="F90495"/>
</dbReference>
<dbReference type="PDB" id="2Q18">
    <property type="method" value="X-ray"/>
    <property type="resolution" value="2.10 A"/>
    <property type="chains" value="X=6-298"/>
</dbReference>
<dbReference type="PDB" id="2Q19">
    <property type="method" value="X-ray"/>
    <property type="resolution" value="3.00 A"/>
    <property type="chains" value="X=6-298"/>
</dbReference>
<dbReference type="PDB" id="2Q1A">
    <property type="method" value="X-ray"/>
    <property type="resolution" value="2.50 A"/>
    <property type="chains" value="X=6-298"/>
</dbReference>
<dbReference type="PDB" id="2Q1C">
    <property type="method" value="X-ray"/>
    <property type="resolution" value="2.80 A"/>
    <property type="chains" value="X=6-298"/>
</dbReference>
<dbReference type="PDB" id="2Q1D">
    <property type="method" value="X-ray"/>
    <property type="resolution" value="2.70 A"/>
    <property type="chains" value="X=6-298"/>
</dbReference>
<dbReference type="PDB" id="3BQB">
    <property type="method" value="X-ray"/>
    <property type="resolution" value="2.70 A"/>
    <property type="chains" value="A/X/Y/Z=6-298"/>
</dbReference>
<dbReference type="PDBsum" id="2Q18"/>
<dbReference type="PDBsum" id="2Q19"/>
<dbReference type="PDBsum" id="2Q1A"/>
<dbReference type="PDBsum" id="2Q1C"/>
<dbReference type="PDBsum" id="2Q1D"/>
<dbReference type="PDBsum" id="3BQB"/>
<dbReference type="SMR" id="Q97UA0"/>
<dbReference type="FunCoup" id="Q97UA0">
    <property type="interactions" value="7"/>
</dbReference>
<dbReference type="STRING" id="273057.SSO3118"/>
<dbReference type="PaxDb" id="273057-SSO3118"/>
<dbReference type="EnsemblBacteria" id="AAK43221">
    <property type="protein sequence ID" value="AAK43221"/>
    <property type="gene ID" value="SSO3118"/>
</dbReference>
<dbReference type="KEGG" id="sso:SSO3118"/>
<dbReference type="PATRIC" id="fig|273057.12.peg.3226"/>
<dbReference type="eggNOG" id="arCOG00236">
    <property type="taxonomic scope" value="Archaea"/>
</dbReference>
<dbReference type="HOGENOM" id="CLU_078481_0_0_2"/>
<dbReference type="InParanoid" id="Q97UA0"/>
<dbReference type="PhylomeDB" id="Q97UA0"/>
<dbReference type="BioCyc" id="MetaCyc:MONOMER-13206"/>
<dbReference type="BRENDA" id="4.2.1.141">
    <property type="organism ID" value="6163"/>
</dbReference>
<dbReference type="EvolutionaryTrace" id="Q97UA0"/>
<dbReference type="Proteomes" id="UP000001974">
    <property type="component" value="Chromosome"/>
</dbReference>
<dbReference type="GO" id="GO:0016836">
    <property type="term" value="F:hydro-lyase activity"/>
    <property type="evidence" value="ECO:0000314"/>
    <property type="project" value="UniProtKB"/>
</dbReference>
<dbReference type="GO" id="GO:0000287">
    <property type="term" value="F:magnesium ion binding"/>
    <property type="evidence" value="ECO:0000314"/>
    <property type="project" value="UniProtKB"/>
</dbReference>
<dbReference type="GO" id="GO:0019571">
    <property type="term" value="P:D-arabinose catabolic process"/>
    <property type="evidence" value="ECO:0000314"/>
    <property type="project" value="UniProtKB"/>
</dbReference>
<dbReference type="GO" id="GO:0051289">
    <property type="term" value="P:protein homotetramerization"/>
    <property type="evidence" value="ECO:0000314"/>
    <property type="project" value="UniProtKB"/>
</dbReference>
<dbReference type="FunFam" id="3.90.850.10:FF:000030">
    <property type="entry name" value="2-dehydro-3-deoxy-D-arabinonate dehydratase"/>
    <property type="match status" value="1"/>
</dbReference>
<dbReference type="Gene3D" id="3.10.330.40">
    <property type="match status" value="1"/>
</dbReference>
<dbReference type="Gene3D" id="3.90.850.10">
    <property type="entry name" value="Fumarylacetoacetase-like, C-terminal domain"/>
    <property type="match status" value="1"/>
</dbReference>
<dbReference type="InterPro" id="IPR051121">
    <property type="entry name" value="FAH"/>
</dbReference>
<dbReference type="InterPro" id="IPR011234">
    <property type="entry name" value="Fumarylacetoacetase-like_C"/>
</dbReference>
<dbReference type="InterPro" id="IPR036663">
    <property type="entry name" value="Fumarylacetoacetase_C_sf"/>
</dbReference>
<dbReference type="PANTHER" id="PTHR42796:SF7">
    <property type="entry name" value="2-DEHYDRO-3-DEOXY-D-ARABINONATE DEHYDRATASE"/>
    <property type="match status" value="1"/>
</dbReference>
<dbReference type="PANTHER" id="PTHR42796">
    <property type="entry name" value="FUMARYLACETOACETATE HYDROLASE DOMAIN-CONTAINING PROTEIN 2A-RELATED"/>
    <property type="match status" value="1"/>
</dbReference>
<dbReference type="Pfam" id="PF01557">
    <property type="entry name" value="FAA_hydrolase"/>
    <property type="match status" value="1"/>
</dbReference>
<dbReference type="SUPFAM" id="SSF56529">
    <property type="entry name" value="FAH"/>
    <property type="match status" value="1"/>
</dbReference>
<sequence>MHFIMMKLFRVVKRGYYISYAILDNSTIIRLDEDPIKALMRYSENKEVLGDRVTGIDYQSLLKSFQINDIRITKPIDPPEVWGSGISYEMARERYSEENVAKILGKTIYEKVYDAVRPEIFFKATPNRCVGHGEAIAVRSDSEWTLPEPELAVVLDSNGKILGYTIMDDVSARDLEAENPLYLPQSKIYAGCCAFGPVIVTSDEIKNPYSLDITLKIVREGRVFFEGSVNTNKMRRKIEEQIQYLIRDNPIPDGTILTTGTAIVPGRDKGLKDEDIVEITISNIGTLITPVKKRRKIT</sequence>
<keyword id="KW-0002">3D-structure</keyword>
<keyword id="KW-0106">Calcium</keyword>
<keyword id="KW-0119">Carbohydrate metabolism</keyword>
<keyword id="KW-0456">Lyase</keyword>
<keyword id="KW-0460">Magnesium</keyword>
<keyword id="KW-0479">Metal-binding</keyword>
<keyword id="KW-1185">Reference proteome</keyword>
<protein>
    <recommendedName>
        <fullName>2-dehydro-3-deoxy-D-arabinonate dehydratase</fullName>
        <ecNumber evidence="6">4.2.1.141</ecNumber>
    </recommendedName>
    <alternativeName>
        <fullName evidence="4">2-keto-3-deoxy-D-arabinonate dehydratase</fullName>
        <shortName evidence="3">KdaD</shortName>
    </alternativeName>
</protein>
<evidence type="ECO:0000269" key="1">
    <source>
    </source>
</evidence>
<evidence type="ECO:0000269" key="2">
    <source>
    </source>
</evidence>
<evidence type="ECO:0000303" key="3">
    <source>
    </source>
</evidence>
<evidence type="ECO:0000303" key="4">
    <source>
    </source>
</evidence>
<evidence type="ECO:0000305" key="5"/>
<evidence type="ECO:0000305" key="6">
    <source>
    </source>
</evidence>
<evidence type="ECO:0000305" key="7">
    <source>
    </source>
</evidence>
<evidence type="ECO:0000312" key="8">
    <source>
        <dbReference type="EMBL" id="AAK43221.1"/>
    </source>
</evidence>
<evidence type="ECO:0000312" key="9">
    <source>
        <dbReference type="Proteomes" id="UP000001974"/>
    </source>
</evidence>
<evidence type="ECO:0007829" key="10">
    <source>
        <dbReference type="PDB" id="2Q18"/>
    </source>
</evidence>
<evidence type="ECO:0007829" key="11">
    <source>
        <dbReference type="PDB" id="2Q1A"/>
    </source>
</evidence>
<accession>Q97UA0</accession>
<feature type="chain" id="PRO_0000430861" description="2-dehydro-3-deoxy-D-arabinonate dehydratase">
    <location>
        <begin position="1"/>
        <end position="298"/>
    </location>
</feature>
<feature type="binding site" evidence="2">
    <location>
        <position position="86"/>
    </location>
    <ligand>
        <name>substrate</name>
    </ligand>
</feature>
<feature type="binding site" evidence="2">
    <location>
        <position position="148"/>
    </location>
    <ligand>
        <name>Mg(2+)</name>
        <dbReference type="ChEBI" id="CHEBI:18420"/>
    </ligand>
</feature>
<feature type="binding site" evidence="2">
    <location>
        <position position="150"/>
    </location>
    <ligand>
        <name>Mg(2+)</name>
        <dbReference type="ChEBI" id="CHEBI:18420"/>
    </ligand>
</feature>
<feature type="binding site" evidence="2">
    <location>
        <position position="169"/>
    </location>
    <ligand>
        <name>Mg(2+)</name>
        <dbReference type="ChEBI" id="CHEBI:18420"/>
    </ligand>
</feature>
<feature type="binding site" evidence="2">
    <location>
        <position position="187"/>
    </location>
    <ligand>
        <name>substrate</name>
    </ligand>
</feature>
<feature type="binding site" evidence="2">
    <location>
        <position position="261"/>
    </location>
    <ligand>
        <name>substrate</name>
    </ligand>
</feature>
<feature type="strand" evidence="10">
    <location>
        <begin position="7"/>
        <end position="13"/>
    </location>
</feature>
<feature type="strand" evidence="10">
    <location>
        <begin position="16"/>
        <end position="22"/>
    </location>
</feature>
<feature type="turn" evidence="11">
    <location>
        <begin position="24"/>
        <end position="26"/>
    </location>
</feature>
<feature type="strand" evidence="10">
    <location>
        <begin position="28"/>
        <end position="33"/>
    </location>
</feature>
<feature type="helix" evidence="10">
    <location>
        <begin position="35"/>
        <end position="45"/>
    </location>
</feature>
<feature type="strand" evidence="10">
    <location>
        <begin position="50"/>
        <end position="55"/>
    </location>
</feature>
<feature type="helix" evidence="10">
    <location>
        <begin position="58"/>
        <end position="64"/>
    </location>
</feature>
<feature type="strand" evidence="10">
    <location>
        <begin position="65"/>
        <end position="67"/>
    </location>
</feature>
<feature type="strand" evidence="10">
    <location>
        <begin position="70"/>
        <end position="72"/>
    </location>
</feature>
<feature type="strand" evidence="10">
    <location>
        <begin position="81"/>
        <end position="86"/>
    </location>
</feature>
<feature type="helix" evidence="11">
    <location>
        <begin position="89"/>
        <end position="93"/>
    </location>
</feature>
<feature type="helix" evidence="10">
    <location>
        <begin position="108"/>
        <end position="114"/>
    </location>
</feature>
<feature type="strand" evidence="10">
    <location>
        <begin position="115"/>
        <end position="117"/>
    </location>
</feature>
<feature type="strand" evidence="10">
    <location>
        <begin position="119"/>
        <end position="124"/>
    </location>
</feature>
<feature type="helix" evidence="10">
    <location>
        <begin position="126"/>
        <end position="128"/>
    </location>
</feature>
<feature type="strand" evidence="10">
    <location>
        <begin position="136"/>
        <end position="138"/>
    </location>
</feature>
<feature type="strand" evidence="10">
    <location>
        <begin position="149"/>
        <end position="155"/>
    </location>
</feature>
<feature type="strand" evidence="10">
    <location>
        <begin position="161"/>
        <end position="169"/>
    </location>
</feature>
<feature type="helix" evidence="10">
    <location>
        <begin position="173"/>
        <end position="178"/>
    </location>
</feature>
<feature type="helix" evidence="10">
    <location>
        <begin position="180"/>
        <end position="182"/>
    </location>
</feature>
<feature type="helix" evidence="10">
    <location>
        <begin position="183"/>
        <end position="187"/>
    </location>
</feature>
<feature type="strand" evidence="10">
    <location>
        <begin position="193"/>
        <end position="200"/>
    </location>
</feature>
<feature type="helix" evidence="10">
    <location>
        <begin position="202"/>
        <end position="204"/>
    </location>
</feature>
<feature type="strand" evidence="10">
    <location>
        <begin position="212"/>
        <end position="219"/>
    </location>
</feature>
<feature type="strand" evidence="10">
    <location>
        <begin position="222"/>
        <end position="230"/>
    </location>
</feature>
<feature type="helix" evidence="10">
    <location>
        <begin position="231"/>
        <end position="233"/>
    </location>
</feature>
<feature type="helix" evidence="10">
    <location>
        <begin position="238"/>
        <end position="246"/>
    </location>
</feature>
<feature type="strand" evidence="10">
    <location>
        <begin position="255"/>
        <end position="258"/>
    </location>
</feature>
<feature type="strand" evidence="10">
    <location>
        <begin position="276"/>
        <end position="281"/>
    </location>
</feature>
<feature type="turn" evidence="10">
    <location>
        <begin position="282"/>
        <end position="284"/>
    </location>
</feature>
<feature type="strand" evidence="10">
    <location>
        <begin position="285"/>
        <end position="293"/>
    </location>
</feature>
<proteinExistence type="evidence at protein level"/>
<organism evidence="8">
    <name type="scientific">Saccharolobus solfataricus (strain ATCC 35092 / DSM 1617 / JCM 11322 / P2)</name>
    <name type="common">Sulfolobus solfataricus</name>
    <dbReference type="NCBI Taxonomy" id="273057"/>
    <lineage>
        <taxon>Archaea</taxon>
        <taxon>Thermoproteota</taxon>
        <taxon>Thermoprotei</taxon>
        <taxon>Sulfolobales</taxon>
        <taxon>Sulfolobaceae</taxon>
        <taxon>Saccharolobus</taxon>
    </lineage>
</organism>
<comment type="function">
    <text evidence="1">Participates in a pentose oxidation pathway that converts D-arabinonate to 2-oxoglutarate.</text>
</comment>
<comment type="catalytic activity">
    <reaction evidence="6">
        <text>2-dehydro-3-deoxy-D-arabinonate = 2,5-dioxopentanoate + H2O</text>
        <dbReference type="Rhea" id="RHEA:35807"/>
        <dbReference type="ChEBI" id="CHEBI:15377"/>
        <dbReference type="ChEBI" id="CHEBI:16699"/>
        <dbReference type="ChEBI" id="CHEBI:58136"/>
        <dbReference type="EC" id="4.2.1.141"/>
    </reaction>
</comment>
<comment type="cofactor">
    <cofactor evidence="7">
        <name>Mg(2+)</name>
        <dbReference type="ChEBI" id="CHEBI:18420"/>
    </cofactor>
    <cofactor evidence="7">
        <name>Ca(2+)</name>
        <dbReference type="ChEBI" id="CHEBI:29108"/>
    </cofactor>
</comment>
<comment type="subunit">
    <text evidence="1 2">Homotetramer.</text>
</comment>
<comment type="induction">
    <text evidence="1">Expression is strongly increased by growth on D-arabinose, both at the mRNA and at the protein level.</text>
</comment>
<comment type="similarity">
    <text evidence="5">Belongs to the FAH family.</text>
</comment>
<gene>
    <name evidence="3" type="primary">kdaD</name>
    <name evidence="8" type="ordered locus">SSO3118</name>
</gene>